<gene>
    <name evidence="6" type="primary">RTL6</name>
    <name evidence="5" type="synonym">LDOC1L</name>
    <name type="synonym">MAR6</name>
    <name evidence="1" type="synonym">MART6</name>
</gene>
<comment type="miscellaneous">
    <text evidence="4">RTL6 is one of at least 11 genes called Mar or Mart related to long terminal repeat retrotransposons. They do not correspond to functional retrotransposons, but rather to neofunctionalized retrotransposons genes.</text>
</comment>
<comment type="similarity">
    <text evidence="5">Belongs to the LDOC1 family.</text>
</comment>
<keyword id="KW-0175">Coiled coil</keyword>
<keyword id="KW-1267">Proteomics identification</keyword>
<keyword id="KW-1185">Reference proteome</keyword>
<feature type="chain" id="PRO_0000289097" description="Retrotransposon Gag-like protein 6">
    <location>
        <begin position="1"/>
        <end position="239"/>
    </location>
</feature>
<feature type="region of interest" description="Disordered" evidence="3">
    <location>
        <begin position="82"/>
        <end position="106"/>
    </location>
</feature>
<feature type="region of interest" description="Disordered" evidence="3">
    <location>
        <begin position="214"/>
        <end position="239"/>
    </location>
</feature>
<feature type="coiled-coil region" evidence="2">
    <location>
        <begin position="29"/>
        <end position="69"/>
    </location>
</feature>
<feature type="compositionally biased region" description="Polar residues" evidence="3">
    <location>
        <begin position="82"/>
        <end position="94"/>
    </location>
</feature>
<feature type="compositionally biased region" description="Low complexity" evidence="3">
    <location>
        <begin position="228"/>
        <end position="239"/>
    </location>
</feature>
<proteinExistence type="evidence at protein level"/>
<organism>
    <name type="scientific">Homo sapiens</name>
    <name type="common">Human</name>
    <dbReference type="NCBI Taxonomy" id="9606"/>
    <lineage>
        <taxon>Eukaryota</taxon>
        <taxon>Metazoa</taxon>
        <taxon>Chordata</taxon>
        <taxon>Craniata</taxon>
        <taxon>Vertebrata</taxon>
        <taxon>Euteleostomi</taxon>
        <taxon>Mammalia</taxon>
        <taxon>Eutheria</taxon>
        <taxon>Euarchontoglires</taxon>
        <taxon>Primates</taxon>
        <taxon>Haplorrhini</taxon>
        <taxon>Catarrhini</taxon>
        <taxon>Hominidae</taxon>
        <taxon>Homo</taxon>
    </lineage>
</organism>
<name>RTL6_HUMAN</name>
<evidence type="ECO:0000250" key="1">
    <source>
        <dbReference type="UniProtKB" id="Q505G4"/>
    </source>
</evidence>
<evidence type="ECO:0000255" key="2"/>
<evidence type="ECO:0000256" key="3">
    <source>
        <dbReference type="SAM" id="MobiDB-lite"/>
    </source>
</evidence>
<evidence type="ECO:0000269" key="4">
    <source>
    </source>
</evidence>
<evidence type="ECO:0000305" key="5"/>
<evidence type="ECO:0000312" key="6">
    <source>
        <dbReference type="HGNC" id="HGNC:13343"/>
    </source>
</evidence>
<reference key="1">
    <citation type="journal article" date="2004" name="Genome Biol.">
        <title>A genome annotation-driven approach to cloning the human ORFeome.</title>
        <authorList>
            <person name="Collins J.E."/>
            <person name="Wright C.L."/>
            <person name="Edwards C.A."/>
            <person name="Davis M.P."/>
            <person name="Grinham J.A."/>
            <person name="Cole C.G."/>
            <person name="Goward M.E."/>
            <person name="Aguado B."/>
            <person name="Mallya M."/>
            <person name="Mokrab Y."/>
            <person name="Huckle E.J."/>
            <person name="Beare D.M."/>
            <person name="Dunham I."/>
        </authorList>
    </citation>
    <scope>NUCLEOTIDE SEQUENCE [LARGE SCALE MRNA]</scope>
</reference>
<reference key="2">
    <citation type="journal article" date="1999" name="Nature">
        <title>The DNA sequence of human chromosome 22.</title>
        <authorList>
            <person name="Dunham I."/>
            <person name="Hunt A.R."/>
            <person name="Collins J.E."/>
            <person name="Bruskiewich R."/>
            <person name="Beare D.M."/>
            <person name="Clamp M."/>
            <person name="Smink L.J."/>
            <person name="Ainscough R."/>
            <person name="Almeida J.P."/>
            <person name="Babbage A.K."/>
            <person name="Bagguley C."/>
            <person name="Bailey J."/>
            <person name="Barlow K.F."/>
            <person name="Bates K.N."/>
            <person name="Beasley O.P."/>
            <person name="Bird C.P."/>
            <person name="Blakey S.E."/>
            <person name="Bridgeman A.M."/>
            <person name="Buck D."/>
            <person name="Burgess J."/>
            <person name="Burrill W.D."/>
            <person name="Burton J."/>
            <person name="Carder C."/>
            <person name="Carter N.P."/>
            <person name="Chen Y."/>
            <person name="Clark G."/>
            <person name="Clegg S.M."/>
            <person name="Cobley V.E."/>
            <person name="Cole C.G."/>
            <person name="Collier R.E."/>
            <person name="Connor R."/>
            <person name="Conroy D."/>
            <person name="Corby N.R."/>
            <person name="Coville G.J."/>
            <person name="Cox A.V."/>
            <person name="Davis J."/>
            <person name="Dawson E."/>
            <person name="Dhami P.D."/>
            <person name="Dockree C."/>
            <person name="Dodsworth S.J."/>
            <person name="Durbin R.M."/>
            <person name="Ellington A.G."/>
            <person name="Evans K.L."/>
            <person name="Fey J.M."/>
            <person name="Fleming K."/>
            <person name="French L."/>
            <person name="Garner A.A."/>
            <person name="Gilbert J.G.R."/>
            <person name="Goward M.E."/>
            <person name="Grafham D.V."/>
            <person name="Griffiths M.N.D."/>
            <person name="Hall C."/>
            <person name="Hall R.E."/>
            <person name="Hall-Tamlyn G."/>
            <person name="Heathcott R.W."/>
            <person name="Ho S."/>
            <person name="Holmes S."/>
            <person name="Hunt S.E."/>
            <person name="Jones M.C."/>
            <person name="Kershaw J."/>
            <person name="Kimberley A.M."/>
            <person name="King A."/>
            <person name="Laird G.K."/>
            <person name="Langford C.F."/>
            <person name="Leversha M.A."/>
            <person name="Lloyd C."/>
            <person name="Lloyd D.M."/>
            <person name="Martyn I.D."/>
            <person name="Mashreghi-Mohammadi M."/>
            <person name="Matthews L.H."/>
            <person name="Mccann O.T."/>
            <person name="Mcclay J."/>
            <person name="Mclaren S."/>
            <person name="McMurray A.A."/>
            <person name="Milne S.A."/>
            <person name="Mortimore B.J."/>
            <person name="Odell C.N."/>
            <person name="Pavitt R."/>
            <person name="Pearce A.V."/>
            <person name="Pearson D."/>
            <person name="Phillimore B.J.C.T."/>
            <person name="Phillips S.H."/>
            <person name="Plumb R.W."/>
            <person name="Ramsay H."/>
            <person name="Ramsey Y."/>
            <person name="Rogers L."/>
            <person name="Ross M.T."/>
            <person name="Scott C.E."/>
            <person name="Sehra H.K."/>
            <person name="Skuce C.D."/>
            <person name="Smalley S."/>
            <person name="Smith M.L."/>
            <person name="Soderlund C."/>
            <person name="Spragon L."/>
            <person name="Steward C.A."/>
            <person name="Sulston J.E."/>
            <person name="Swann R.M."/>
            <person name="Vaudin M."/>
            <person name="Wall M."/>
            <person name="Wallis J.M."/>
            <person name="Whiteley M.N."/>
            <person name="Willey D.L."/>
            <person name="Williams L."/>
            <person name="Williams S.A."/>
            <person name="Williamson H."/>
            <person name="Wilmer T.E."/>
            <person name="Wilming L."/>
            <person name="Wright C.L."/>
            <person name="Hubbard T."/>
            <person name="Bentley D.R."/>
            <person name="Beck S."/>
            <person name="Rogers J."/>
            <person name="Shimizu N."/>
            <person name="Minoshima S."/>
            <person name="Kawasaki K."/>
            <person name="Sasaki T."/>
            <person name="Asakawa S."/>
            <person name="Kudoh J."/>
            <person name="Shintani A."/>
            <person name="Shibuya K."/>
            <person name="Yoshizaki Y."/>
            <person name="Aoki N."/>
            <person name="Mitsuyama S."/>
            <person name="Roe B.A."/>
            <person name="Chen F."/>
            <person name="Chu L."/>
            <person name="Crabtree J."/>
            <person name="Deschamps S."/>
            <person name="Do A."/>
            <person name="Do T."/>
            <person name="Dorman A."/>
            <person name="Fang F."/>
            <person name="Fu Y."/>
            <person name="Hu P."/>
            <person name="Hua A."/>
            <person name="Kenton S."/>
            <person name="Lai H."/>
            <person name="Lao H.I."/>
            <person name="Lewis J."/>
            <person name="Lewis S."/>
            <person name="Lin S.-P."/>
            <person name="Loh P."/>
            <person name="Malaj E."/>
            <person name="Nguyen T."/>
            <person name="Pan H."/>
            <person name="Phan S."/>
            <person name="Qi S."/>
            <person name="Qian Y."/>
            <person name="Ray L."/>
            <person name="Ren Q."/>
            <person name="Shaull S."/>
            <person name="Sloan D."/>
            <person name="Song L."/>
            <person name="Wang Q."/>
            <person name="Wang Y."/>
            <person name="Wang Z."/>
            <person name="White J."/>
            <person name="Willingham D."/>
            <person name="Wu H."/>
            <person name="Yao Z."/>
            <person name="Zhan M."/>
            <person name="Zhang G."/>
            <person name="Chissoe S."/>
            <person name="Murray J."/>
            <person name="Miller N."/>
            <person name="Minx P."/>
            <person name="Fulton R."/>
            <person name="Johnson D."/>
            <person name="Bemis G."/>
            <person name="Bentley D."/>
            <person name="Bradshaw H."/>
            <person name="Bourne S."/>
            <person name="Cordes M."/>
            <person name="Du Z."/>
            <person name="Fulton L."/>
            <person name="Goela D."/>
            <person name="Graves T."/>
            <person name="Hawkins J."/>
            <person name="Hinds K."/>
            <person name="Kemp K."/>
            <person name="Latreille P."/>
            <person name="Layman D."/>
            <person name="Ozersky P."/>
            <person name="Rohlfing T."/>
            <person name="Scheet P."/>
            <person name="Walker C."/>
            <person name="Wamsley A."/>
            <person name="Wohldmann P."/>
            <person name="Pepin K."/>
            <person name="Nelson J."/>
            <person name="Korf I."/>
            <person name="Bedell J.A."/>
            <person name="Hillier L.W."/>
            <person name="Mardis E."/>
            <person name="Waterston R."/>
            <person name="Wilson R."/>
            <person name="Emanuel B.S."/>
            <person name="Shaikh T."/>
            <person name="Kurahashi H."/>
            <person name="Saitta S."/>
            <person name="Budarf M.L."/>
            <person name="McDermid H.E."/>
            <person name="Johnson A."/>
            <person name="Wong A.C.C."/>
            <person name="Morrow B.E."/>
            <person name="Edelmann L."/>
            <person name="Kim U.J."/>
            <person name="Shizuya H."/>
            <person name="Simon M.I."/>
            <person name="Dumanski J.P."/>
            <person name="Peyrard M."/>
            <person name="Kedra D."/>
            <person name="Seroussi E."/>
            <person name="Fransson I."/>
            <person name="Tapia I."/>
            <person name="Bruder C.E."/>
            <person name="O'Brien K.P."/>
            <person name="Wilkinson P."/>
            <person name="Bodenteich A."/>
            <person name="Hartman K."/>
            <person name="Hu X."/>
            <person name="Khan A.S."/>
            <person name="Lane L."/>
            <person name="Tilahun Y."/>
            <person name="Wright H."/>
        </authorList>
    </citation>
    <scope>NUCLEOTIDE SEQUENCE [LARGE SCALE GENOMIC DNA]</scope>
</reference>
<reference key="3">
    <citation type="journal article" date="2004" name="Genome Res.">
        <title>The status, quality, and expansion of the NIH full-length cDNA project: the Mammalian Gene Collection (MGC).</title>
        <authorList>
            <consortium name="The MGC Project Team"/>
        </authorList>
    </citation>
    <scope>NUCLEOTIDE SEQUENCE [LARGE SCALE MRNA]</scope>
    <source>
        <tissue>Brain</tissue>
    </source>
</reference>
<reference key="4">
    <citation type="journal article" date="2004" name="Nat. Genet.">
        <title>Complete sequencing and characterization of 21,243 full-length human cDNAs.</title>
        <authorList>
            <person name="Ota T."/>
            <person name="Suzuki Y."/>
            <person name="Nishikawa T."/>
            <person name="Otsuki T."/>
            <person name="Sugiyama T."/>
            <person name="Irie R."/>
            <person name="Wakamatsu A."/>
            <person name="Hayashi K."/>
            <person name="Sato H."/>
            <person name="Nagai K."/>
            <person name="Kimura K."/>
            <person name="Makita H."/>
            <person name="Sekine M."/>
            <person name="Obayashi M."/>
            <person name="Nishi T."/>
            <person name="Shibahara T."/>
            <person name="Tanaka T."/>
            <person name="Ishii S."/>
            <person name="Yamamoto J."/>
            <person name="Saito K."/>
            <person name="Kawai Y."/>
            <person name="Isono Y."/>
            <person name="Nakamura Y."/>
            <person name="Nagahari K."/>
            <person name="Murakami K."/>
            <person name="Yasuda T."/>
            <person name="Iwayanagi T."/>
            <person name="Wagatsuma M."/>
            <person name="Shiratori A."/>
            <person name="Sudo H."/>
            <person name="Hosoiri T."/>
            <person name="Kaku Y."/>
            <person name="Kodaira H."/>
            <person name="Kondo H."/>
            <person name="Sugawara M."/>
            <person name="Takahashi M."/>
            <person name="Kanda K."/>
            <person name="Yokoi T."/>
            <person name="Furuya T."/>
            <person name="Kikkawa E."/>
            <person name="Omura Y."/>
            <person name="Abe K."/>
            <person name="Kamihara K."/>
            <person name="Katsuta N."/>
            <person name="Sato K."/>
            <person name="Tanikawa M."/>
            <person name="Yamazaki M."/>
            <person name="Ninomiya K."/>
            <person name="Ishibashi T."/>
            <person name="Yamashita H."/>
            <person name="Murakawa K."/>
            <person name="Fujimori K."/>
            <person name="Tanai H."/>
            <person name="Kimata M."/>
            <person name="Watanabe M."/>
            <person name="Hiraoka S."/>
            <person name="Chiba Y."/>
            <person name="Ishida S."/>
            <person name="Ono Y."/>
            <person name="Takiguchi S."/>
            <person name="Watanabe S."/>
            <person name="Yosida M."/>
            <person name="Hotuta T."/>
            <person name="Kusano J."/>
            <person name="Kanehori K."/>
            <person name="Takahashi-Fujii A."/>
            <person name="Hara H."/>
            <person name="Tanase T.-O."/>
            <person name="Nomura Y."/>
            <person name="Togiya S."/>
            <person name="Komai F."/>
            <person name="Hara R."/>
            <person name="Takeuchi K."/>
            <person name="Arita M."/>
            <person name="Imose N."/>
            <person name="Musashino K."/>
            <person name="Yuuki H."/>
            <person name="Oshima A."/>
            <person name="Sasaki N."/>
            <person name="Aotsuka S."/>
            <person name="Yoshikawa Y."/>
            <person name="Matsunawa H."/>
            <person name="Ichihara T."/>
            <person name="Shiohata N."/>
            <person name="Sano S."/>
            <person name="Moriya S."/>
            <person name="Momiyama H."/>
            <person name="Satoh N."/>
            <person name="Takami S."/>
            <person name="Terashima Y."/>
            <person name="Suzuki O."/>
            <person name="Nakagawa S."/>
            <person name="Senoh A."/>
            <person name="Mizoguchi H."/>
            <person name="Goto Y."/>
            <person name="Shimizu F."/>
            <person name="Wakebe H."/>
            <person name="Hishigaki H."/>
            <person name="Watanabe T."/>
            <person name="Sugiyama A."/>
            <person name="Takemoto M."/>
            <person name="Kawakami B."/>
            <person name="Yamazaki M."/>
            <person name="Watanabe K."/>
            <person name="Kumagai A."/>
            <person name="Itakura S."/>
            <person name="Fukuzumi Y."/>
            <person name="Fujimori Y."/>
            <person name="Komiyama M."/>
            <person name="Tashiro H."/>
            <person name="Tanigami A."/>
            <person name="Fujiwara T."/>
            <person name="Ono T."/>
            <person name="Yamada K."/>
            <person name="Fujii Y."/>
            <person name="Ozaki K."/>
            <person name="Hirao M."/>
            <person name="Ohmori Y."/>
            <person name="Kawabata A."/>
            <person name="Hikiji T."/>
            <person name="Kobatake N."/>
            <person name="Inagaki H."/>
            <person name="Ikema Y."/>
            <person name="Okamoto S."/>
            <person name="Okitani R."/>
            <person name="Kawakami T."/>
            <person name="Noguchi S."/>
            <person name="Itoh T."/>
            <person name="Shigeta K."/>
            <person name="Senba T."/>
            <person name="Matsumura K."/>
            <person name="Nakajima Y."/>
            <person name="Mizuno T."/>
            <person name="Morinaga M."/>
            <person name="Sasaki M."/>
            <person name="Togashi T."/>
            <person name="Oyama M."/>
            <person name="Hata H."/>
            <person name="Watanabe M."/>
            <person name="Komatsu T."/>
            <person name="Mizushima-Sugano J."/>
            <person name="Satoh T."/>
            <person name="Shirai Y."/>
            <person name="Takahashi Y."/>
            <person name="Nakagawa K."/>
            <person name="Okumura K."/>
            <person name="Nagase T."/>
            <person name="Nomura N."/>
            <person name="Kikuchi H."/>
            <person name="Masuho Y."/>
            <person name="Yamashita R."/>
            <person name="Nakai K."/>
            <person name="Yada T."/>
            <person name="Nakamura Y."/>
            <person name="Ohara O."/>
            <person name="Isogai T."/>
            <person name="Sugano S."/>
        </authorList>
    </citation>
    <scope>NUCLEOTIDE SEQUENCE [LARGE SCALE MRNA] OF 87-239</scope>
    <source>
        <tissue>Trachea</tissue>
    </source>
</reference>
<reference key="5">
    <citation type="journal article" date="2005" name="Cytogenet. Genome Res.">
        <title>A family of neofunctionalized Ty3/gypsy retrotransposon genes in mammalian genomes.</title>
        <authorList>
            <person name="Brandt J."/>
            <person name="Veith A.-M."/>
            <person name="Volff J.-N."/>
        </authorList>
    </citation>
    <scope>GENE FAMILY</scope>
</reference>
<accession>Q6ICC9</accession>
<accession>Q6ZTR1</accession>
<protein>
    <recommendedName>
        <fullName evidence="6">Retrotransposon Gag-like protein 6</fullName>
    </recommendedName>
    <alternativeName>
        <fullName>Leucine zipper protein down-regulated in cancer cells-like</fullName>
    </alternativeName>
    <alternativeName>
        <fullName evidence="1">Mammalian retrotransposon-derived protein 6</fullName>
    </alternativeName>
    <alternativeName>
        <fullName evidence="5">Protein LDOC1L</fullName>
    </alternativeName>
</protein>
<sequence length="239" mass="26154">MVQPQTSKAESPALAASPNAQMDDVIDTLTSLRLTNSALRREASTLRAEKANLTNMLESVMAELTLLRTRARIPGALQITPPISSITSNGTRPMTTPPTSLPEPFSGDPGRLAGFLMQMDRFMIFQASRFPGEAERVAFLVSRLTGEAEKWAIPHMQPDSPLRNNYQGFLAELRRTYKSPLRHARRAQIRKTSASNRAVRERQMLCRQLASAGTGPCPVHPASNGTSPAPALPARARNL</sequence>
<dbReference type="EMBL" id="CR456439">
    <property type="protein sequence ID" value="CAG30325.1"/>
    <property type="molecule type" value="mRNA"/>
</dbReference>
<dbReference type="EMBL" id="Z75407">
    <property type="status" value="NOT_ANNOTATED_CDS"/>
    <property type="molecule type" value="Genomic_DNA"/>
</dbReference>
<dbReference type="EMBL" id="BC030232">
    <property type="protein sequence ID" value="AAH30232.1"/>
    <property type="molecule type" value="mRNA"/>
</dbReference>
<dbReference type="EMBL" id="AK126304">
    <property type="status" value="NOT_ANNOTATED_CDS"/>
    <property type="molecule type" value="mRNA"/>
</dbReference>
<dbReference type="CCDS" id="CCDS33662.1"/>
<dbReference type="RefSeq" id="NP_115663.2">
    <property type="nucleotide sequence ID" value="NM_032287.2"/>
</dbReference>
<dbReference type="BioGRID" id="123975">
    <property type="interactions" value="13"/>
</dbReference>
<dbReference type="FunCoup" id="Q6ICC9">
    <property type="interactions" value="88"/>
</dbReference>
<dbReference type="IntAct" id="Q6ICC9">
    <property type="interactions" value="9"/>
</dbReference>
<dbReference type="STRING" id="9606.ENSP00000340434"/>
<dbReference type="GlyGen" id="Q6ICC9">
    <property type="glycosylation" value="3 sites, 1 N-linked glycan (1 site), 1 O-linked glycan (1 site)"/>
</dbReference>
<dbReference type="iPTMnet" id="Q6ICC9"/>
<dbReference type="PhosphoSitePlus" id="Q6ICC9"/>
<dbReference type="BioMuta" id="RTL6"/>
<dbReference type="DMDM" id="74762303"/>
<dbReference type="jPOST" id="Q6ICC9"/>
<dbReference type="MassIVE" id="Q6ICC9"/>
<dbReference type="PaxDb" id="9606-ENSP00000340434"/>
<dbReference type="PeptideAtlas" id="Q6ICC9"/>
<dbReference type="ProteomicsDB" id="66384"/>
<dbReference type="Pumba" id="Q6ICC9"/>
<dbReference type="Antibodypedia" id="333">
    <property type="antibodies" value="108 antibodies from 24 providers"/>
</dbReference>
<dbReference type="DNASU" id="84247"/>
<dbReference type="Ensembl" id="ENST00000341255.4">
    <property type="protein sequence ID" value="ENSP00000340434.3"/>
    <property type="gene ID" value="ENSG00000188636.4"/>
</dbReference>
<dbReference type="GeneID" id="84247"/>
<dbReference type="KEGG" id="hsa:84247"/>
<dbReference type="MANE-Select" id="ENST00000341255.4">
    <property type="protein sequence ID" value="ENSP00000340434.3"/>
    <property type="RefSeq nucleotide sequence ID" value="NM_032287.3"/>
    <property type="RefSeq protein sequence ID" value="NP_115663.2"/>
</dbReference>
<dbReference type="UCSC" id="uc003beu.2">
    <property type="organism name" value="human"/>
</dbReference>
<dbReference type="AGR" id="HGNC:13343"/>
<dbReference type="CTD" id="84247"/>
<dbReference type="DisGeNET" id="84247"/>
<dbReference type="GeneCards" id="RTL6"/>
<dbReference type="HGNC" id="HGNC:13343">
    <property type="gene designation" value="RTL6"/>
</dbReference>
<dbReference type="HPA" id="ENSG00000188636">
    <property type="expression patterns" value="Low tissue specificity"/>
</dbReference>
<dbReference type="MIM" id="621006">
    <property type="type" value="gene"/>
</dbReference>
<dbReference type="neXtProt" id="NX_Q6ICC9"/>
<dbReference type="OpenTargets" id="ENSG00000188636"/>
<dbReference type="PharmGKB" id="PA134971270"/>
<dbReference type="VEuPathDB" id="HostDB:ENSG00000188636"/>
<dbReference type="eggNOG" id="ENOG502R33E">
    <property type="taxonomic scope" value="Eukaryota"/>
</dbReference>
<dbReference type="GeneTree" id="ENSGT00940000162853"/>
<dbReference type="HOGENOM" id="CLU_101832_0_0_1"/>
<dbReference type="InParanoid" id="Q6ICC9"/>
<dbReference type="OMA" id="TCASNRA"/>
<dbReference type="OrthoDB" id="9660564at2759"/>
<dbReference type="PAN-GO" id="Q6ICC9">
    <property type="GO annotations" value="0 GO annotations based on evolutionary models"/>
</dbReference>
<dbReference type="PhylomeDB" id="Q6ICC9"/>
<dbReference type="TreeFam" id="TF337113"/>
<dbReference type="PathwayCommons" id="Q6ICC9"/>
<dbReference type="SignaLink" id="Q6ICC9"/>
<dbReference type="BioGRID-ORCS" id="84247">
    <property type="hits" value="16 hits in 1154 CRISPR screens"/>
</dbReference>
<dbReference type="ChiTaRS" id="LDOC1L">
    <property type="organism name" value="human"/>
</dbReference>
<dbReference type="GenomeRNAi" id="84247"/>
<dbReference type="Pharos" id="Q6ICC9">
    <property type="development level" value="Tbio"/>
</dbReference>
<dbReference type="PRO" id="PR:Q6ICC9"/>
<dbReference type="Proteomes" id="UP000005640">
    <property type="component" value="Chromosome 22"/>
</dbReference>
<dbReference type="RNAct" id="Q6ICC9">
    <property type="molecule type" value="protein"/>
</dbReference>
<dbReference type="Bgee" id="ENSG00000188636">
    <property type="expression patterns" value="Expressed in endothelial cell and 191 other cell types or tissues"/>
</dbReference>
<dbReference type="InterPro" id="IPR032549">
    <property type="entry name" value="DUF4939"/>
</dbReference>
<dbReference type="Pfam" id="PF16297">
    <property type="entry name" value="DUF4939"/>
    <property type="match status" value="1"/>
</dbReference>